<comment type="function">
    <text evidence="1">Synthesizes selenophosphate from selenide and ATP.</text>
</comment>
<comment type="catalytic activity">
    <reaction evidence="1">
        <text>hydrogenselenide + ATP + H2O = selenophosphate + AMP + phosphate + 2 H(+)</text>
        <dbReference type="Rhea" id="RHEA:18737"/>
        <dbReference type="ChEBI" id="CHEBI:15377"/>
        <dbReference type="ChEBI" id="CHEBI:15378"/>
        <dbReference type="ChEBI" id="CHEBI:16144"/>
        <dbReference type="ChEBI" id="CHEBI:29317"/>
        <dbReference type="ChEBI" id="CHEBI:30616"/>
        <dbReference type="ChEBI" id="CHEBI:43474"/>
        <dbReference type="ChEBI" id="CHEBI:456215"/>
        <dbReference type="EC" id="2.7.9.3"/>
    </reaction>
</comment>
<comment type="cofactor">
    <cofactor evidence="1">
        <name>Mg(2+)</name>
        <dbReference type="ChEBI" id="CHEBI:18420"/>
    </cofactor>
    <text evidence="1">Binds 1 Mg(2+) ion per monomer.</text>
</comment>
<comment type="subunit">
    <text evidence="1">Homodimer.</text>
</comment>
<comment type="similarity">
    <text evidence="1">Belongs to the selenophosphate synthase 1 family. Class I subfamily.</text>
</comment>
<gene>
    <name evidence="1" type="primary">selD</name>
    <name type="ordered locus">SF1459</name>
    <name type="ordered locus">S1574</name>
</gene>
<sequence>MSENSIRLTQYSHGAGCGCKISPKVLETILHSEQAKFVDPNLLVGNETRDDAAVYDLGNGTSVISTTDFFMPIVDNPFDFGRIAATNAISDIFAMGGKPIMAIAILGWPINKLSPEIAREVTEGGRYACRQAGIALAGGHSIDAPEPIFGLAVTGIVPTERVKKNSTAQAGCKLFLTKPLGIGVLTTAEKKSLLKPEHQGLATEVMCRMNIAGASFANIEGVKAMTDVTGFGLLGHLSEMCQGAGVQARVDYEAIPKLPGVEEYIKLGAVPGGTERNFASYGHLMGEMPREVRDLLCDPQTSGGLLLAVMPEAENEVKTTAAEFGIELTAIGELVPARGGRAMVEIR</sequence>
<feature type="chain" id="PRO_0000127640" description="Selenide, water dikinase">
    <location>
        <begin position="1"/>
        <end position="347"/>
    </location>
</feature>
<feature type="active site" evidence="1">
    <location>
        <position position="17"/>
    </location>
</feature>
<feature type="binding site" description="in other chain" evidence="1">
    <location>
        <position position="20"/>
    </location>
    <ligand>
        <name>ATP</name>
        <dbReference type="ChEBI" id="CHEBI:30616"/>
        <note>ligand shared between dimeric partners</note>
    </ligand>
</feature>
<feature type="binding site" description="in other chain" evidence="1">
    <location>
        <begin position="48"/>
        <end position="50"/>
    </location>
    <ligand>
        <name>ATP</name>
        <dbReference type="ChEBI" id="CHEBI:30616"/>
        <note>ligand shared between dimeric partners</note>
    </ligand>
</feature>
<feature type="binding site" evidence="1">
    <location>
        <position position="51"/>
    </location>
    <ligand>
        <name>Mg(2+)</name>
        <dbReference type="ChEBI" id="CHEBI:18420"/>
    </ligand>
</feature>
<feature type="binding site" description="in other chain" evidence="1">
    <location>
        <position position="68"/>
    </location>
    <ligand>
        <name>ATP</name>
        <dbReference type="ChEBI" id="CHEBI:30616"/>
        <note>ligand shared between dimeric partners</note>
    </ligand>
</feature>
<feature type="binding site" description="in other chain" evidence="1">
    <location>
        <position position="91"/>
    </location>
    <ligand>
        <name>ATP</name>
        <dbReference type="ChEBI" id="CHEBI:30616"/>
        <note>ligand shared between dimeric partners</note>
    </ligand>
</feature>
<feature type="binding site" evidence="1">
    <location>
        <position position="91"/>
    </location>
    <ligand>
        <name>Mg(2+)</name>
        <dbReference type="ChEBI" id="CHEBI:18420"/>
    </ligand>
</feature>
<feature type="binding site" evidence="1">
    <location>
        <begin position="139"/>
        <end position="141"/>
    </location>
    <ligand>
        <name>ATP</name>
        <dbReference type="ChEBI" id="CHEBI:30616"/>
        <note>ligand shared between dimeric partners</note>
    </ligand>
</feature>
<feature type="binding site" evidence="1">
    <location>
        <position position="227"/>
    </location>
    <ligand>
        <name>Mg(2+)</name>
        <dbReference type="ChEBI" id="CHEBI:18420"/>
    </ligand>
</feature>
<feature type="site" description="Important for catalytic activity" evidence="1">
    <location>
        <position position="20"/>
    </location>
</feature>
<proteinExistence type="inferred from homology"/>
<organism>
    <name type="scientific">Shigella flexneri</name>
    <dbReference type="NCBI Taxonomy" id="623"/>
    <lineage>
        <taxon>Bacteria</taxon>
        <taxon>Pseudomonadati</taxon>
        <taxon>Pseudomonadota</taxon>
        <taxon>Gammaproteobacteria</taxon>
        <taxon>Enterobacterales</taxon>
        <taxon>Enterobacteriaceae</taxon>
        <taxon>Shigella</taxon>
    </lineage>
</organism>
<keyword id="KW-0067">ATP-binding</keyword>
<keyword id="KW-0418">Kinase</keyword>
<keyword id="KW-0460">Magnesium</keyword>
<keyword id="KW-0479">Metal-binding</keyword>
<keyword id="KW-0547">Nucleotide-binding</keyword>
<keyword id="KW-1185">Reference proteome</keyword>
<keyword id="KW-0711">Selenium</keyword>
<keyword id="KW-0808">Transferase</keyword>
<name>SELD_SHIFL</name>
<dbReference type="EC" id="2.7.9.3" evidence="1"/>
<dbReference type="EMBL" id="AE005674">
    <property type="protein sequence ID" value="AAN43056.2"/>
    <property type="molecule type" value="Genomic_DNA"/>
</dbReference>
<dbReference type="EMBL" id="AE014073">
    <property type="protein sequence ID" value="AAP16951.1"/>
    <property type="molecule type" value="Genomic_DNA"/>
</dbReference>
<dbReference type="RefSeq" id="NP_707349.2">
    <property type="nucleotide sequence ID" value="NC_004337.2"/>
</dbReference>
<dbReference type="RefSeq" id="WP_001370476.1">
    <property type="nucleotide sequence ID" value="NZ_WPGW01000118.1"/>
</dbReference>
<dbReference type="SMR" id="P59393"/>
<dbReference type="STRING" id="198214.SF1459"/>
<dbReference type="PaxDb" id="198214-SF1459"/>
<dbReference type="DNASU" id="1080913"/>
<dbReference type="GeneID" id="1027483"/>
<dbReference type="KEGG" id="sfl:SF1459"/>
<dbReference type="KEGG" id="sfx:S1574"/>
<dbReference type="PATRIC" id="fig|198214.7.peg.1717"/>
<dbReference type="HOGENOM" id="CLU_032859_0_1_6"/>
<dbReference type="Proteomes" id="UP000001006">
    <property type="component" value="Chromosome"/>
</dbReference>
<dbReference type="Proteomes" id="UP000002673">
    <property type="component" value="Chromosome"/>
</dbReference>
<dbReference type="GO" id="GO:0005737">
    <property type="term" value="C:cytoplasm"/>
    <property type="evidence" value="ECO:0007669"/>
    <property type="project" value="TreeGrafter"/>
</dbReference>
<dbReference type="GO" id="GO:0005524">
    <property type="term" value="F:ATP binding"/>
    <property type="evidence" value="ECO:0007669"/>
    <property type="project" value="UniProtKB-UniRule"/>
</dbReference>
<dbReference type="GO" id="GO:0000287">
    <property type="term" value="F:magnesium ion binding"/>
    <property type="evidence" value="ECO:0007669"/>
    <property type="project" value="UniProtKB-UniRule"/>
</dbReference>
<dbReference type="GO" id="GO:0004756">
    <property type="term" value="F:selenide, water dikinase activity"/>
    <property type="evidence" value="ECO:0007669"/>
    <property type="project" value="UniProtKB-UniRule"/>
</dbReference>
<dbReference type="GO" id="GO:0016260">
    <property type="term" value="P:selenocysteine biosynthetic process"/>
    <property type="evidence" value="ECO:0007669"/>
    <property type="project" value="InterPro"/>
</dbReference>
<dbReference type="CDD" id="cd02195">
    <property type="entry name" value="SelD"/>
    <property type="match status" value="1"/>
</dbReference>
<dbReference type="FunFam" id="3.30.1330.10:FF:000003">
    <property type="entry name" value="Selenide, water dikinase"/>
    <property type="match status" value="1"/>
</dbReference>
<dbReference type="FunFam" id="3.90.650.10:FF:000004">
    <property type="entry name" value="Selenide, water dikinase"/>
    <property type="match status" value="1"/>
</dbReference>
<dbReference type="Gene3D" id="3.90.650.10">
    <property type="entry name" value="PurM-like C-terminal domain"/>
    <property type="match status" value="1"/>
</dbReference>
<dbReference type="Gene3D" id="3.30.1330.10">
    <property type="entry name" value="PurM-like, N-terminal domain"/>
    <property type="match status" value="1"/>
</dbReference>
<dbReference type="HAMAP" id="MF_00625">
    <property type="entry name" value="SelD"/>
    <property type="match status" value="1"/>
</dbReference>
<dbReference type="InterPro" id="IPR010918">
    <property type="entry name" value="PurM-like_C_dom"/>
</dbReference>
<dbReference type="InterPro" id="IPR036676">
    <property type="entry name" value="PurM-like_C_sf"/>
</dbReference>
<dbReference type="InterPro" id="IPR016188">
    <property type="entry name" value="PurM-like_N"/>
</dbReference>
<dbReference type="InterPro" id="IPR036921">
    <property type="entry name" value="PurM-like_N_sf"/>
</dbReference>
<dbReference type="InterPro" id="IPR023061">
    <property type="entry name" value="SelD_I"/>
</dbReference>
<dbReference type="InterPro" id="IPR004536">
    <property type="entry name" value="SPS/SelD"/>
</dbReference>
<dbReference type="NCBIfam" id="NF002098">
    <property type="entry name" value="PRK00943.1"/>
    <property type="match status" value="1"/>
</dbReference>
<dbReference type="NCBIfam" id="TIGR00476">
    <property type="entry name" value="selD"/>
    <property type="match status" value="1"/>
</dbReference>
<dbReference type="PANTHER" id="PTHR10256:SF0">
    <property type="entry name" value="INACTIVE SELENIDE, WATER DIKINASE-LIKE PROTEIN-RELATED"/>
    <property type="match status" value="1"/>
</dbReference>
<dbReference type="PANTHER" id="PTHR10256">
    <property type="entry name" value="SELENIDE, WATER DIKINASE"/>
    <property type="match status" value="1"/>
</dbReference>
<dbReference type="Pfam" id="PF00586">
    <property type="entry name" value="AIRS"/>
    <property type="match status" value="1"/>
</dbReference>
<dbReference type="Pfam" id="PF02769">
    <property type="entry name" value="AIRS_C"/>
    <property type="match status" value="1"/>
</dbReference>
<dbReference type="PIRSF" id="PIRSF036407">
    <property type="entry name" value="Selenphspht_syn"/>
    <property type="match status" value="1"/>
</dbReference>
<dbReference type="SUPFAM" id="SSF56042">
    <property type="entry name" value="PurM C-terminal domain-like"/>
    <property type="match status" value="1"/>
</dbReference>
<dbReference type="SUPFAM" id="SSF55326">
    <property type="entry name" value="PurM N-terminal domain-like"/>
    <property type="match status" value="1"/>
</dbReference>
<accession>P59393</accession>
<protein>
    <recommendedName>
        <fullName evidence="1">Selenide, water dikinase</fullName>
        <ecNumber evidence="1">2.7.9.3</ecNumber>
    </recommendedName>
    <alternativeName>
        <fullName evidence="1">Selenium donor protein</fullName>
    </alternativeName>
    <alternativeName>
        <fullName evidence="1">Selenophosphate synthase</fullName>
    </alternativeName>
</protein>
<reference key="1">
    <citation type="journal article" date="2002" name="Nucleic Acids Res.">
        <title>Genome sequence of Shigella flexneri 2a: insights into pathogenicity through comparison with genomes of Escherichia coli K12 and O157.</title>
        <authorList>
            <person name="Jin Q."/>
            <person name="Yuan Z."/>
            <person name="Xu J."/>
            <person name="Wang Y."/>
            <person name="Shen Y."/>
            <person name="Lu W."/>
            <person name="Wang J."/>
            <person name="Liu H."/>
            <person name="Yang J."/>
            <person name="Yang F."/>
            <person name="Zhang X."/>
            <person name="Zhang J."/>
            <person name="Yang G."/>
            <person name="Wu H."/>
            <person name="Qu D."/>
            <person name="Dong J."/>
            <person name="Sun L."/>
            <person name="Xue Y."/>
            <person name="Zhao A."/>
            <person name="Gao Y."/>
            <person name="Zhu J."/>
            <person name="Kan B."/>
            <person name="Ding K."/>
            <person name="Chen S."/>
            <person name="Cheng H."/>
            <person name="Yao Z."/>
            <person name="He B."/>
            <person name="Chen R."/>
            <person name="Ma D."/>
            <person name="Qiang B."/>
            <person name="Wen Y."/>
            <person name="Hou Y."/>
            <person name="Yu J."/>
        </authorList>
    </citation>
    <scope>NUCLEOTIDE SEQUENCE [LARGE SCALE GENOMIC DNA]</scope>
    <source>
        <strain>301 / Serotype 2a</strain>
    </source>
</reference>
<reference key="2">
    <citation type="journal article" date="2003" name="Infect. Immun.">
        <title>Complete genome sequence and comparative genomics of Shigella flexneri serotype 2a strain 2457T.</title>
        <authorList>
            <person name="Wei J."/>
            <person name="Goldberg M.B."/>
            <person name="Burland V."/>
            <person name="Venkatesan M.M."/>
            <person name="Deng W."/>
            <person name="Fournier G."/>
            <person name="Mayhew G.F."/>
            <person name="Plunkett G. III"/>
            <person name="Rose D.J."/>
            <person name="Darling A."/>
            <person name="Mau B."/>
            <person name="Perna N.T."/>
            <person name="Payne S.M."/>
            <person name="Runyen-Janecky L.J."/>
            <person name="Zhou S."/>
            <person name="Schwartz D.C."/>
            <person name="Blattner F.R."/>
        </authorList>
    </citation>
    <scope>NUCLEOTIDE SEQUENCE [LARGE SCALE GENOMIC DNA]</scope>
    <source>
        <strain>ATCC 700930 / 2457T / Serotype 2a</strain>
    </source>
</reference>
<evidence type="ECO:0000255" key="1">
    <source>
        <dbReference type="HAMAP-Rule" id="MF_00625"/>
    </source>
</evidence>